<proteinExistence type="inferred from homology"/>
<sequence length="803" mass="87925">MKRIFGIFIFLSLLLFLVPLLASCTKEKQVYIVYFGEHKGDKAFHEIEAHHHSYLQSVKETEEDATSSLLYRRASSINGFAAELTPDQASRLKELKEVVSVFKSDPRKYKIHTTRSWEFVGLKEEEGEDYRSDGDAPRHKYDVNDRFRVGRKFLKNAKHGDGVIVGLIDSGVWPESRSFDDKGMGPIPESWKGICQTGVAFNSSHCNRKIIGARYYARGYERYYGPFNAEANKDFLSPRDADGHGSHTASTAVGRRVDGVSALGGIAMGTASGGASLARLAVYKACWAVPNKEKYATNTCFDEDMLAAFDDAIADGVNVISISIGTVEPHTYLEDGIAIGALHAVKRDIVVAASAGNDGPARETLSNPAPWIITVGASSLDRFFVGRLELGDGYVFESDSLTTLKMDNYAPLVYAPDVVVPGVSRNDAMLCLPNALSPDHVRGKVVLCLRGYGSGSTIGKGLEVKRAGGVGMILANSRDNDAFDVESHFVPTALVFSSTVDRILDYIYNTYEPVAFIKPAETVLYRNQPEDSVYPFSSRAPNWVDANILKPDIIAPGLNILAAWSGADSASKDSIDRRVLDYNLDSGTSMSCPHVAGAIALLKSMHPTWSSAAIRSALMTTASMTNEDNEPIQDYDGSPANPFALGSRHFRPTKAASPGLVYDASYQSYLLYCCSVGLTNLDPTFKCPSRIPPGYNLNYPSISIPYLSGTVTVTRTVTCVGRTGNSTSVYVFNAQPPNGVLVKAEPNVLVFDKIGQKKRFNIIFTTQRYEFTGEARRDRYRFGWFSWTDGHHVVRSSIAVSLV</sequence>
<protein>
    <recommendedName>
        <fullName evidence="7">Subtilisin-like protease SBT5.5</fullName>
        <ecNumber evidence="6">3.4.21.-</ecNumber>
    </recommendedName>
    <alternativeName>
        <fullName evidence="7">Subtilase subfamily 5 member 5</fullName>
        <shortName evidence="7">AtSBT5.5</shortName>
    </alternativeName>
</protein>
<name>SBT55_ARATH</name>
<accession>F4KEL0</accession>
<accession>Q9FK77</accession>
<organism evidence="11">
    <name type="scientific">Arabidopsis thaliana</name>
    <name type="common">Mouse-ear cress</name>
    <dbReference type="NCBI Taxonomy" id="3702"/>
    <lineage>
        <taxon>Eukaryota</taxon>
        <taxon>Viridiplantae</taxon>
        <taxon>Streptophyta</taxon>
        <taxon>Embryophyta</taxon>
        <taxon>Tracheophyta</taxon>
        <taxon>Spermatophyta</taxon>
        <taxon>Magnoliopsida</taxon>
        <taxon>eudicotyledons</taxon>
        <taxon>Gunneridae</taxon>
        <taxon>Pentapetalae</taxon>
        <taxon>rosids</taxon>
        <taxon>malvids</taxon>
        <taxon>Brassicales</taxon>
        <taxon>Brassicaceae</taxon>
        <taxon>Camelineae</taxon>
        <taxon>Arabidopsis</taxon>
    </lineage>
</organism>
<reference key="1">
    <citation type="journal article" date="1998" name="DNA Res.">
        <title>Structural analysis of Arabidopsis thaliana chromosome 5. VI. Sequence features of the regions of 1,367,185 bp covered by 19 physically assigned P1 and TAC clones.</title>
        <authorList>
            <person name="Kotani H."/>
            <person name="Nakamura Y."/>
            <person name="Sato S."/>
            <person name="Asamizu E."/>
            <person name="Kaneko T."/>
            <person name="Miyajima N."/>
            <person name="Tabata S."/>
        </authorList>
    </citation>
    <scope>NUCLEOTIDE SEQUENCE [LARGE SCALE GENOMIC DNA]</scope>
    <source>
        <strain>cv. Columbia</strain>
    </source>
</reference>
<reference key="2">
    <citation type="journal article" date="2017" name="Plant J.">
        <title>Araport11: a complete reannotation of the Arabidopsis thaliana reference genome.</title>
        <authorList>
            <person name="Cheng C.Y."/>
            <person name="Krishnakumar V."/>
            <person name="Chan A.P."/>
            <person name="Thibaud-Nissen F."/>
            <person name="Schobel S."/>
            <person name="Town C.D."/>
        </authorList>
    </citation>
    <scope>GENOME REANNOTATION</scope>
    <source>
        <strain>cv. Columbia</strain>
    </source>
</reference>
<reference key="3">
    <citation type="journal article" date="2005" name="PLoS Comput. Biol.">
        <title>Inferring hypotheses on functional relationships of genes: Analysis of the Arabidopsis thaliana subtilase gene family.</title>
        <authorList>
            <person name="Rautengarten C."/>
            <person name="Steinhauser D."/>
            <person name="Bussis D."/>
            <person name="Stintzi A."/>
            <person name="Schaller A."/>
            <person name="Kopka J."/>
            <person name="Altmann T."/>
        </authorList>
    </citation>
    <scope>GENE FAMILY</scope>
    <scope>NOMENCLATURE</scope>
</reference>
<gene>
    <name evidence="7" type="primary">SBT5.5</name>
    <name evidence="9" type="ordered locus">At5g45640</name>
    <name evidence="10" type="ORF">MRA19.4</name>
</gene>
<evidence type="ECO:0000250" key="1">
    <source>
        <dbReference type="UniProtKB" id="Q39547"/>
    </source>
</evidence>
<evidence type="ECO:0000250" key="2">
    <source>
        <dbReference type="UniProtKB" id="Q84WS0"/>
    </source>
</evidence>
<evidence type="ECO:0000255" key="3"/>
<evidence type="ECO:0000255" key="4">
    <source>
        <dbReference type="PROSITE-ProRule" id="PRU00498"/>
    </source>
</evidence>
<evidence type="ECO:0000255" key="5">
    <source>
        <dbReference type="PROSITE-ProRule" id="PRU01240"/>
    </source>
</evidence>
<evidence type="ECO:0000255" key="6">
    <source>
        <dbReference type="PROSITE-ProRule" id="PRU10082"/>
    </source>
</evidence>
<evidence type="ECO:0000303" key="7">
    <source>
    </source>
</evidence>
<evidence type="ECO:0000305" key="8"/>
<evidence type="ECO:0000312" key="9">
    <source>
        <dbReference type="Araport" id="AT5G45640"/>
    </source>
</evidence>
<evidence type="ECO:0000312" key="10">
    <source>
        <dbReference type="EMBL" id="BAB09207.1"/>
    </source>
</evidence>
<evidence type="ECO:0000312" key="11">
    <source>
        <dbReference type="Proteomes" id="UP000006548"/>
    </source>
</evidence>
<dbReference type="EC" id="3.4.21.-" evidence="6"/>
<dbReference type="EMBL" id="AB012245">
    <property type="protein sequence ID" value="BAB09207.1"/>
    <property type="status" value="ALT_SEQ"/>
    <property type="molecule type" value="Genomic_DNA"/>
</dbReference>
<dbReference type="EMBL" id="CP002688">
    <property type="protein sequence ID" value="AED95279.1"/>
    <property type="status" value="ALT_SEQ"/>
    <property type="molecule type" value="Genomic_DNA"/>
</dbReference>
<dbReference type="RefSeq" id="NP_199377.2">
    <property type="nucleotide sequence ID" value="NM_123932.2"/>
</dbReference>
<dbReference type="SMR" id="F4KEL0"/>
<dbReference type="FunCoup" id="F4KEL0">
    <property type="interactions" value="1"/>
</dbReference>
<dbReference type="STRING" id="3702.F4KEL0"/>
<dbReference type="MEROPS" id="S08.A05"/>
<dbReference type="GlyCosmos" id="F4KEL0">
    <property type="glycosylation" value="2 sites, No reported glycans"/>
</dbReference>
<dbReference type="GlyGen" id="F4KEL0">
    <property type="glycosylation" value="2 sites"/>
</dbReference>
<dbReference type="PaxDb" id="3702-AT5G45640.1"/>
<dbReference type="PeptideAtlas" id="F4KEL0"/>
<dbReference type="GeneID" id="834604"/>
<dbReference type="KEGG" id="ath:AT5G45640"/>
<dbReference type="Araport" id="AT5G45640"/>
<dbReference type="TAIR" id="AT5G45640"/>
<dbReference type="eggNOG" id="ENOG502QRC5">
    <property type="taxonomic scope" value="Eukaryota"/>
</dbReference>
<dbReference type="HOGENOM" id="CLU_000625_4_3_1"/>
<dbReference type="InParanoid" id="F4KEL0"/>
<dbReference type="PRO" id="PR:F4KEL0"/>
<dbReference type="Proteomes" id="UP000006548">
    <property type="component" value="Chromosome 5"/>
</dbReference>
<dbReference type="ExpressionAtlas" id="F4KEL0">
    <property type="expression patterns" value="differential"/>
</dbReference>
<dbReference type="GO" id="GO:0005576">
    <property type="term" value="C:extracellular region"/>
    <property type="evidence" value="ECO:0007669"/>
    <property type="project" value="UniProtKB-SubCell"/>
</dbReference>
<dbReference type="GO" id="GO:0004252">
    <property type="term" value="F:serine-type endopeptidase activity"/>
    <property type="evidence" value="ECO:0007669"/>
    <property type="project" value="InterPro"/>
</dbReference>
<dbReference type="GO" id="GO:0006508">
    <property type="term" value="P:proteolysis"/>
    <property type="evidence" value="ECO:0007669"/>
    <property type="project" value="UniProtKB-KW"/>
</dbReference>
<dbReference type="CDD" id="cd02120">
    <property type="entry name" value="PA_subtilisin_like"/>
    <property type="match status" value="1"/>
</dbReference>
<dbReference type="CDD" id="cd04852">
    <property type="entry name" value="Peptidases_S8_3"/>
    <property type="match status" value="1"/>
</dbReference>
<dbReference type="FunFam" id="3.40.50.200:FF:000006">
    <property type="entry name" value="Subtilisin-like protease SBT1.5"/>
    <property type="match status" value="1"/>
</dbReference>
<dbReference type="Gene3D" id="2.60.40.2310">
    <property type="match status" value="1"/>
</dbReference>
<dbReference type="Gene3D" id="3.50.30.30">
    <property type="match status" value="1"/>
</dbReference>
<dbReference type="Gene3D" id="3.30.70.80">
    <property type="entry name" value="Peptidase S8 propeptide/proteinase inhibitor I9"/>
    <property type="match status" value="1"/>
</dbReference>
<dbReference type="Gene3D" id="3.40.50.200">
    <property type="entry name" value="Peptidase S8/S53 domain"/>
    <property type="match status" value="1"/>
</dbReference>
<dbReference type="InterPro" id="IPR003137">
    <property type="entry name" value="PA_domain"/>
</dbReference>
<dbReference type="InterPro" id="IPR000209">
    <property type="entry name" value="Peptidase_S8/S53_dom"/>
</dbReference>
<dbReference type="InterPro" id="IPR036852">
    <property type="entry name" value="Peptidase_S8/S53_dom_sf"/>
</dbReference>
<dbReference type="InterPro" id="IPR023828">
    <property type="entry name" value="Peptidase_S8_Ser-AS"/>
</dbReference>
<dbReference type="InterPro" id="IPR015500">
    <property type="entry name" value="Peptidase_S8_subtilisin-rel"/>
</dbReference>
<dbReference type="InterPro" id="IPR034197">
    <property type="entry name" value="Peptidases_S8_3"/>
</dbReference>
<dbReference type="InterPro" id="IPR010259">
    <property type="entry name" value="S8pro/Inhibitor_I9"/>
</dbReference>
<dbReference type="InterPro" id="IPR037045">
    <property type="entry name" value="S8pro/Inhibitor_I9_sf"/>
</dbReference>
<dbReference type="InterPro" id="IPR045051">
    <property type="entry name" value="SBT"/>
</dbReference>
<dbReference type="InterPro" id="IPR041469">
    <property type="entry name" value="Subtilisin-like_FN3"/>
</dbReference>
<dbReference type="PANTHER" id="PTHR10795">
    <property type="entry name" value="PROPROTEIN CONVERTASE SUBTILISIN/KEXIN"/>
    <property type="match status" value="1"/>
</dbReference>
<dbReference type="Pfam" id="PF17766">
    <property type="entry name" value="fn3_6"/>
    <property type="match status" value="1"/>
</dbReference>
<dbReference type="Pfam" id="PF05922">
    <property type="entry name" value="Inhibitor_I9"/>
    <property type="match status" value="1"/>
</dbReference>
<dbReference type="Pfam" id="PF02225">
    <property type="entry name" value="PA"/>
    <property type="match status" value="1"/>
</dbReference>
<dbReference type="Pfam" id="PF00082">
    <property type="entry name" value="Peptidase_S8"/>
    <property type="match status" value="1"/>
</dbReference>
<dbReference type="PRINTS" id="PR00723">
    <property type="entry name" value="SUBTILISIN"/>
</dbReference>
<dbReference type="SUPFAM" id="SSF52743">
    <property type="entry name" value="Subtilisin-like"/>
    <property type="match status" value="1"/>
</dbReference>
<dbReference type="PROSITE" id="PS51892">
    <property type="entry name" value="SUBTILASE"/>
    <property type="match status" value="1"/>
</dbReference>
<dbReference type="PROSITE" id="PS00138">
    <property type="entry name" value="SUBTILASE_SER"/>
    <property type="match status" value="1"/>
</dbReference>
<feature type="signal peptide" evidence="3">
    <location>
        <begin position="1"/>
        <end position="22"/>
    </location>
</feature>
<feature type="propeptide" id="PRO_0000435257" description="Activation peptide" evidence="1">
    <location>
        <begin position="23"/>
        <end position="112"/>
    </location>
</feature>
<feature type="chain" id="PRO_5003311630" description="Subtilisin-like protease SBT5.5" evidence="3">
    <location>
        <begin position="113"/>
        <end status="unknown"/>
    </location>
</feature>
<feature type="propeptide" id="PRO_0000435258" evidence="1">
    <location>
        <begin status="unknown"/>
        <end position="803"/>
    </location>
</feature>
<feature type="domain" description="Inhibitor I9" evidence="3">
    <location>
        <begin position="30"/>
        <end position="108"/>
    </location>
</feature>
<feature type="domain" description="Peptidase S8" evidence="5">
    <location>
        <begin position="140"/>
        <end position="656"/>
    </location>
</feature>
<feature type="domain" description="PA" evidence="3">
    <location>
        <begin position="409"/>
        <end position="504"/>
    </location>
</feature>
<feature type="active site" description="Charge relay system" evidence="5">
    <location>
        <position position="169"/>
    </location>
</feature>
<feature type="active site" description="Charge relay system" evidence="5">
    <location>
        <position position="244"/>
    </location>
</feature>
<feature type="active site" description="Charge relay system" evidence="5">
    <location>
        <position position="589"/>
    </location>
</feature>
<feature type="glycosylation site" description="N-linked (GlcNAc...) asparagine" evidence="4">
    <location>
        <position position="202"/>
    </location>
</feature>
<feature type="glycosylation site" description="N-linked (GlcNAc...) asparagine" evidence="4">
    <location>
        <position position="725"/>
    </location>
</feature>
<keyword id="KW-0068">Autocatalytic cleavage</keyword>
<keyword id="KW-0325">Glycoprotein</keyword>
<keyword id="KW-0378">Hydrolase</keyword>
<keyword id="KW-0645">Protease</keyword>
<keyword id="KW-1185">Reference proteome</keyword>
<keyword id="KW-0964">Secreted</keyword>
<keyword id="KW-0720">Serine protease</keyword>
<keyword id="KW-0732">Signal</keyword>
<keyword id="KW-0865">Zymogen</keyword>
<comment type="subcellular location">
    <subcellularLocation>
        <location evidence="2">Secreted</location>
    </subcellularLocation>
</comment>
<comment type="similarity">
    <text evidence="8">Belongs to the peptidase S8 family.</text>
</comment>
<comment type="sequence caution" evidence="8">
    <conflict type="erroneous gene model prediction">
        <sequence resource="EMBL-CDS" id="AED95279"/>
    </conflict>
</comment>
<comment type="sequence caution" evidence="8">
    <conflict type="erroneous gene model prediction">
        <sequence resource="EMBL-CDS" id="BAB09207"/>
    </conflict>
</comment>